<proteinExistence type="inferred from homology"/>
<reference key="1">
    <citation type="journal article" date="1999" name="Nature">
        <title>Genomic sequence comparison of two unrelated isolates of the human gastric pathogen Helicobacter pylori.</title>
        <authorList>
            <person name="Alm R.A."/>
            <person name="Ling L.-S.L."/>
            <person name="Moir D.T."/>
            <person name="King B.L."/>
            <person name="Brown E.D."/>
            <person name="Doig P.C."/>
            <person name="Smith D.R."/>
            <person name="Noonan B."/>
            <person name="Guild B.C."/>
            <person name="deJonge B.L."/>
            <person name="Carmel G."/>
            <person name="Tummino P.J."/>
            <person name="Caruso A."/>
            <person name="Uria-Nickelsen M."/>
            <person name="Mills D.M."/>
            <person name="Ives C."/>
            <person name="Gibson R."/>
            <person name="Merberg D."/>
            <person name="Mills S.D."/>
            <person name="Jiang Q."/>
            <person name="Taylor D.E."/>
            <person name="Vovis G.F."/>
            <person name="Trust T.J."/>
        </authorList>
    </citation>
    <scope>NUCLEOTIDE SEQUENCE [LARGE SCALE GENOMIC DNA]</scope>
    <source>
        <strain>J99 / ATCC 700824</strain>
    </source>
</reference>
<accession>Q9ZJU9</accession>
<comment type="function">
    <text evidence="1">The beta subunit is responsible for the synthesis of L-tryptophan from indole and L-serine.</text>
</comment>
<comment type="catalytic activity">
    <reaction>
        <text>(1S,2R)-1-C-(indol-3-yl)glycerol 3-phosphate + L-serine = D-glyceraldehyde 3-phosphate + L-tryptophan + H2O</text>
        <dbReference type="Rhea" id="RHEA:10532"/>
        <dbReference type="ChEBI" id="CHEBI:15377"/>
        <dbReference type="ChEBI" id="CHEBI:33384"/>
        <dbReference type="ChEBI" id="CHEBI:57912"/>
        <dbReference type="ChEBI" id="CHEBI:58866"/>
        <dbReference type="ChEBI" id="CHEBI:59776"/>
        <dbReference type="EC" id="4.2.1.20"/>
    </reaction>
</comment>
<comment type="cofactor">
    <cofactor evidence="1">
        <name>pyridoxal 5'-phosphate</name>
        <dbReference type="ChEBI" id="CHEBI:597326"/>
    </cofactor>
</comment>
<comment type="pathway">
    <text>Amino-acid biosynthesis; L-tryptophan biosynthesis; L-tryptophan from chorismate: step 5/5.</text>
</comment>
<comment type="subunit">
    <text evidence="1">Tetramer of two alpha and two beta chains.</text>
</comment>
<comment type="similarity">
    <text evidence="2">Belongs to the TrpB family.</text>
</comment>
<protein>
    <recommendedName>
        <fullName>Tryptophan synthase beta chain</fullName>
        <ecNumber>4.2.1.20</ecNumber>
    </recommendedName>
</protein>
<organism>
    <name type="scientific">Helicobacter pylori (strain J99 / ATCC 700824)</name>
    <name type="common">Campylobacter pylori J99</name>
    <dbReference type="NCBI Taxonomy" id="85963"/>
    <lineage>
        <taxon>Bacteria</taxon>
        <taxon>Pseudomonadati</taxon>
        <taxon>Campylobacterota</taxon>
        <taxon>Epsilonproteobacteria</taxon>
        <taxon>Campylobacterales</taxon>
        <taxon>Helicobacteraceae</taxon>
        <taxon>Helicobacter</taxon>
    </lineage>
</organism>
<sequence length="393" mass="42812">MNQKAYFGEFGGSFVSELLVPALRELEQAFDTCLKDEEFQKEYFRLLKDFVGRPSPLTLCQNIVSNPKVKLYLKREDLIHGGAHKTNQALGQALLAKKMGKTRIIAETGAGQHGVATAIACALLNLKCVIFMGGKDIKRQEMNVFRMRLLGAEVREVNSGSATLKDAVNEALRDWASSYKDTHYLLGTSAGPHPYPTMVKTFQKMIGDEVKSQILEKENRLPDYVIACVGGGSNAIGIFSAFLNDKEVKLIGVEPAGLGLETNKHGATLNKGRVGILHGNKTYLLQDDEGQIAESHSISAGLDYPGVGPEHSYLKEIGRAVYESASDIEALEAFRLLCQKEGIIPALESSHALAYALKLAQKCAQEKIIVVNLSGRGDKDLSTVYNALKGGLK</sequence>
<dbReference type="EC" id="4.2.1.20"/>
<dbReference type="EMBL" id="AE001439">
    <property type="protein sequence ID" value="AAD06778.1"/>
    <property type="molecule type" value="Genomic_DNA"/>
</dbReference>
<dbReference type="PIR" id="C71836">
    <property type="entry name" value="C71836"/>
</dbReference>
<dbReference type="RefSeq" id="WP_001072044.1">
    <property type="nucleotide sequence ID" value="NC_000921.1"/>
</dbReference>
<dbReference type="SMR" id="Q9ZJU9"/>
<dbReference type="KEGG" id="hpj:jhp_1199"/>
<dbReference type="eggNOG" id="COG0133">
    <property type="taxonomic scope" value="Bacteria"/>
</dbReference>
<dbReference type="UniPathway" id="UPA00035">
    <property type="reaction ID" value="UER00044"/>
</dbReference>
<dbReference type="Proteomes" id="UP000000804">
    <property type="component" value="Chromosome"/>
</dbReference>
<dbReference type="GO" id="GO:0005737">
    <property type="term" value="C:cytoplasm"/>
    <property type="evidence" value="ECO:0007669"/>
    <property type="project" value="TreeGrafter"/>
</dbReference>
<dbReference type="GO" id="GO:0004834">
    <property type="term" value="F:tryptophan synthase activity"/>
    <property type="evidence" value="ECO:0007669"/>
    <property type="project" value="UniProtKB-UniRule"/>
</dbReference>
<dbReference type="CDD" id="cd06446">
    <property type="entry name" value="Trp-synth_B"/>
    <property type="match status" value="1"/>
</dbReference>
<dbReference type="FunFam" id="3.40.50.1100:FF:000001">
    <property type="entry name" value="Tryptophan synthase beta chain"/>
    <property type="match status" value="1"/>
</dbReference>
<dbReference type="FunFam" id="3.40.50.1100:FF:000004">
    <property type="entry name" value="Tryptophan synthase beta chain"/>
    <property type="match status" value="1"/>
</dbReference>
<dbReference type="Gene3D" id="3.40.50.1100">
    <property type="match status" value="2"/>
</dbReference>
<dbReference type="HAMAP" id="MF_00133">
    <property type="entry name" value="Trp_synth_beta"/>
    <property type="match status" value="1"/>
</dbReference>
<dbReference type="InterPro" id="IPR006653">
    <property type="entry name" value="Trp_synth_b_CS"/>
</dbReference>
<dbReference type="InterPro" id="IPR006654">
    <property type="entry name" value="Trp_synth_beta"/>
</dbReference>
<dbReference type="InterPro" id="IPR023026">
    <property type="entry name" value="Trp_synth_beta/beta-like"/>
</dbReference>
<dbReference type="InterPro" id="IPR001926">
    <property type="entry name" value="TrpB-like_PALP"/>
</dbReference>
<dbReference type="InterPro" id="IPR036052">
    <property type="entry name" value="TrpB-like_PALP_sf"/>
</dbReference>
<dbReference type="NCBIfam" id="TIGR00263">
    <property type="entry name" value="trpB"/>
    <property type="match status" value="1"/>
</dbReference>
<dbReference type="PANTHER" id="PTHR48077:SF3">
    <property type="entry name" value="TRYPTOPHAN SYNTHASE"/>
    <property type="match status" value="1"/>
</dbReference>
<dbReference type="PANTHER" id="PTHR48077">
    <property type="entry name" value="TRYPTOPHAN SYNTHASE-RELATED"/>
    <property type="match status" value="1"/>
</dbReference>
<dbReference type="Pfam" id="PF00291">
    <property type="entry name" value="PALP"/>
    <property type="match status" value="1"/>
</dbReference>
<dbReference type="PIRSF" id="PIRSF001413">
    <property type="entry name" value="Trp_syn_beta"/>
    <property type="match status" value="1"/>
</dbReference>
<dbReference type="SUPFAM" id="SSF53686">
    <property type="entry name" value="Tryptophan synthase beta subunit-like PLP-dependent enzymes"/>
    <property type="match status" value="1"/>
</dbReference>
<dbReference type="PROSITE" id="PS00168">
    <property type="entry name" value="TRP_SYNTHASE_BETA"/>
    <property type="match status" value="1"/>
</dbReference>
<gene>
    <name type="primary">trpB</name>
    <name type="ordered locus">jhp_1199</name>
</gene>
<evidence type="ECO:0000250" key="1"/>
<evidence type="ECO:0000305" key="2"/>
<feature type="chain" id="PRO_0000098956" description="Tryptophan synthase beta chain">
    <location>
        <begin position="1"/>
        <end position="393"/>
    </location>
</feature>
<feature type="modified residue" description="N6-(pyridoxal phosphate)lysine" evidence="1">
    <location>
        <position position="85"/>
    </location>
</feature>
<name>TRPB_HELPJ</name>
<keyword id="KW-0028">Amino-acid biosynthesis</keyword>
<keyword id="KW-0057">Aromatic amino acid biosynthesis</keyword>
<keyword id="KW-0456">Lyase</keyword>
<keyword id="KW-0663">Pyridoxal phosphate</keyword>
<keyword id="KW-0822">Tryptophan biosynthesis</keyword>